<feature type="chain" id="PRO_0000329488" description="Polyribonucleotide nucleotidyltransferase">
    <location>
        <begin position="1"/>
        <end position="713"/>
    </location>
</feature>
<feature type="domain" description="KH" evidence="1">
    <location>
        <begin position="554"/>
        <end position="613"/>
    </location>
</feature>
<feature type="domain" description="S1 motif" evidence="1">
    <location>
        <begin position="623"/>
        <end position="691"/>
    </location>
</feature>
<feature type="binding site" evidence="1">
    <location>
        <position position="487"/>
    </location>
    <ligand>
        <name>Mg(2+)</name>
        <dbReference type="ChEBI" id="CHEBI:18420"/>
    </ligand>
</feature>
<feature type="binding site" evidence="1">
    <location>
        <position position="493"/>
    </location>
    <ligand>
        <name>Mg(2+)</name>
        <dbReference type="ChEBI" id="CHEBI:18420"/>
    </ligand>
</feature>
<evidence type="ECO:0000255" key="1">
    <source>
        <dbReference type="HAMAP-Rule" id="MF_01595"/>
    </source>
</evidence>
<proteinExistence type="inferred from homology"/>
<protein>
    <recommendedName>
        <fullName evidence="1">Polyribonucleotide nucleotidyltransferase</fullName>
        <ecNumber evidence="1">2.7.7.8</ecNumber>
    </recommendedName>
    <alternativeName>
        <fullName evidence="1">Polynucleotide phosphorylase</fullName>
        <shortName evidence="1">PNPase</shortName>
    </alternativeName>
</protein>
<keyword id="KW-0963">Cytoplasm</keyword>
<keyword id="KW-0460">Magnesium</keyword>
<keyword id="KW-0479">Metal-binding</keyword>
<keyword id="KW-0548">Nucleotidyltransferase</keyword>
<keyword id="KW-1185">Reference proteome</keyword>
<keyword id="KW-0694">RNA-binding</keyword>
<keyword id="KW-0808">Transferase</keyword>
<organism>
    <name type="scientific">Agrobacterium fabrum (strain C58 / ATCC 33970)</name>
    <name type="common">Agrobacterium tumefaciens (strain C58)</name>
    <dbReference type="NCBI Taxonomy" id="176299"/>
    <lineage>
        <taxon>Bacteria</taxon>
        <taxon>Pseudomonadati</taxon>
        <taxon>Pseudomonadota</taxon>
        <taxon>Alphaproteobacteria</taxon>
        <taxon>Hyphomicrobiales</taxon>
        <taxon>Rhizobiaceae</taxon>
        <taxon>Rhizobium/Agrobacterium group</taxon>
        <taxon>Agrobacterium</taxon>
        <taxon>Agrobacterium tumefaciens complex</taxon>
    </lineage>
</organism>
<accession>A9CKQ7</accession>
<dbReference type="EC" id="2.7.7.8" evidence="1"/>
<dbReference type="EMBL" id="AE007869">
    <property type="protein sequence ID" value="AAK85903.1"/>
    <property type="molecule type" value="Genomic_DNA"/>
</dbReference>
<dbReference type="PIR" id="AE2586">
    <property type="entry name" value="AE2586"/>
</dbReference>
<dbReference type="PIR" id="F97368">
    <property type="entry name" value="F97368"/>
</dbReference>
<dbReference type="RefSeq" id="NP_353118.1">
    <property type="nucleotide sequence ID" value="NC_003062.2"/>
</dbReference>
<dbReference type="RefSeq" id="WP_010970644.1">
    <property type="nucleotide sequence ID" value="NC_003062.2"/>
</dbReference>
<dbReference type="SMR" id="A9CKQ7"/>
<dbReference type="STRING" id="176299.Atu0082"/>
<dbReference type="EnsemblBacteria" id="AAK85903">
    <property type="protein sequence ID" value="AAK85903"/>
    <property type="gene ID" value="Atu0082"/>
</dbReference>
<dbReference type="GeneID" id="1132120"/>
<dbReference type="KEGG" id="atu:Atu0082"/>
<dbReference type="PATRIC" id="fig|176299.10.peg.75"/>
<dbReference type="eggNOG" id="COG1185">
    <property type="taxonomic scope" value="Bacteria"/>
</dbReference>
<dbReference type="HOGENOM" id="CLU_004217_2_2_5"/>
<dbReference type="OrthoDB" id="9804305at2"/>
<dbReference type="PhylomeDB" id="A9CKQ7"/>
<dbReference type="BioCyc" id="AGRO:ATU0082-MONOMER"/>
<dbReference type="Proteomes" id="UP000000813">
    <property type="component" value="Chromosome circular"/>
</dbReference>
<dbReference type="GO" id="GO:0005829">
    <property type="term" value="C:cytosol"/>
    <property type="evidence" value="ECO:0007669"/>
    <property type="project" value="TreeGrafter"/>
</dbReference>
<dbReference type="GO" id="GO:0000175">
    <property type="term" value="F:3'-5'-RNA exonuclease activity"/>
    <property type="evidence" value="ECO:0007669"/>
    <property type="project" value="TreeGrafter"/>
</dbReference>
<dbReference type="GO" id="GO:0000287">
    <property type="term" value="F:magnesium ion binding"/>
    <property type="evidence" value="ECO:0007669"/>
    <property type="project" value="UniProtKB-UniRule"/>
</dbReference>
<dbReference type="GO" id="GO:0004654">
    <property type="term" value="F:polyribonucleotide nucleotidyltransferase activity"/>
    <property type="evidence" value="ECO:0007669"/>
    <property type="project" value="UniProtKB-UniRule"/>
</dbReference>
<dbReference type="GO" id="GO:0003723">
    <property type="term" value="F:RNA binding"/>
    <property type="evidence" value="ECO:0007669"/>
    <property type="project" value="UniProtKB-UniRule"/>
</dbReference>
<dbReference type="GO" id="GO:0006402">
    <property type="term" value="P:mRNA catabolic process"/>
    <property type="evidence" value="ECO:0007669"/>
    <property type="project" value="UniProtKB-UniRule"/>
</dbReference>
<dbReference type="GO" id="GO:0006396">
    <property type="term" value="P:RNA processing"/>
    <property type="evidence" value="ECO:0007669"/>
    <property type="project" value="InterPro"/>
</dbReference>
<dbReference type="CDD" id="cd02393">
    <property type="entry name" value="KH-I_PNPase"/>
    <property type="match status" value="1"/>
</dbReference>
<dbReference type="CDD" id="cd11363">
    <property type="entry name" value="RNase_PH_PNPase_1"/>
    <property type="match status" value="1"/>
</dbReference>
<dbReference type="CDD" id="cd11364">
    <property type="entry name" value="RNase_PH_PNPase_2"/>
    <property type="match status" value="1"/>
</dbReference>
<dbReference type="CDD" id="cd04472">
    <property type="entry name" value="S1_PNPase"/>
    <property type="match status" value="1"/>
</dbReference>
<dbReference type="FunFam" id="2.40.50.140:FF:000107">
    <property type="entry name" value="Polyribonucleotide nucleotidyltransferase"/>
    <property type="match status" value="1"/>
</dbReference>
<dbReference type="FunFam" id="3.30.1370.10:FF:000001">
    <property type="entry name" value="Polyribonucleotide nucleotidyltransferase"/>
    <property type="match status" value="1"/>
</dbReference>
<dbReference type="FunFam" id="3.30.230.70:FF:000001">
    <property type="entry name" value="Polyribonucleotide nucleotidyltransferase"/>
    <property type="match status" value="1"/>
</dbReference>
<dbReference type="FunFam" id="3.30.230.70:FF:000002">
    <property type="entry name" value="Polyribonucleotide nucleotidyltransferase"/>
    <property type="match status" value="1"/>
</dbReference>
<dbReference type="Gene3D" id="3.30.230.70">
    <property type="entry name" value="GHMP Kinase, N-terminal domain"/>
    <property type="match status" value="2"/>
</dbReference>
<dbReference type="Gene3D" id="3.30.1370.10">
    <property type="entry name" value="K Homology domain, type 1"/>
    <property type="match status" value="1"/>
</dbReference>
<dbReference type="Gene3D" id="2.40.50.140">
    <property type="entry name" value="Nucleic acid-binding proteins"/>
    <property type="match status" value="1"/>
</dbReference>
<dbReference type="HAMAP" id="MF_01595">
    <property type="entry name" value="PNPase"/>
    <property type="match status" value="1"/>
</dbReference>
<dbReference type="InterPro" id="IPR001247">
    <property type="entry name" value="ExoRNase_PH_dom1"/>
</dbReference>
<dbReference type="InterPro" id="IPR015847">
    <property type="entry name" value="ExoRNase_PH_dom2"/>
</dbReference>
<dbReference type="InterPro" id="IPR036345">
    <property type="entry name" value="ExoRNase_PH_dom2_sf"/>
</dbReference>
<dbReference type="InterPro" id="IPR004087">
    <property type="entry name" value="KH_dom"/>
</dbReference>
<dbReference type="InterPro" id="IPR004088">
    <property type="entry name" value="KH_dom_type_1"/>
</dbReference>
<dbReference type="InterPro" id="IPR036612">
    <property type="entry name" value="KH_dom_type_1_sf"/>
</dbReference>
<dbReference type="InterPro" id="IPR012340">
    <property type="entry name" value="NA-bd_OB-fold"/>
</dbReference>
<dbReference type="InterPro" id="IPR012162">
    <property type="entry name" value="PNPase"/>
</dbReference>
<dbReference type="InterPro" id="IPR027408">
    <property type="entry name" value="PNPase/RNase_PH_dom_sf"/>
</dbReference>
<dbReference type="InterPro" id="IPR015848">
    <property type="entry name" value="PNPase_PH_RNA-bd_bac/org-type"/>
</dbReference>
<dbReference type="InterPro" id="IPR036456">
    <property type="entry name" value="PNPase_PH_RNA-bd_sf"/>
</dbReference>
<dbReference type="InterPro" id="IPR020568">
    <property type="entry name" value="Ribosomal_Su5_D2-typ_SF"/>
</dbReference>
<dbReference type="InterPro" id="IPR003029">
    <property type="entry name" value="S1_domain"/>
</dbReference>
<dbReference type="NCBIfam" id="TIGR03591">
    <property type="entry name" value="polynuc_phos"/>
    <property type="match status" value="1"/>
</dbReference>
<dbReference type="NCBIfam" id="NF008805">
    <property type="entry name" value="PRK11824.1"/>
    <property type="match status" value="1"/>
</dbReference>
<dbReference type="PANTHER" id="PTHR11252">
    <property type="entry name" value="POLYRIBONUCLEOTIDE NUCLEOTIDYLTRANSFERASE"/>
    <property type="match status" value="1"/>
</dbReference>
<dbReference type="PANTHER" id="PTHR11252:SF0">
    <property type="entry name" value="POLYRIBONUCLEOTIDE NUCLEOTIDYLTRANSFERASE 1, MITOCHONDRIAL"/>
    <property type="match status" value="1"/>
</dbReference>
<dbReference type="Pfam" id="PF00013">
    <property type="entry name" value="KH_1"/>
    <property type="match status" value="1"/>
</dbReference>
<dbReference type="Pfam" id="PF03726">
    <property type="entry name" value="PNPase"/>
    <property type="match status" value="1"/>
</dbReference>
<dbReference type="Pfam" id="PF01138">
    <property type="entry name" value="RNase_PH"/>
    <property type="match status" value="2"/>
</dbReference>
<dbReference type="Pfam" id="PF03725">
    <property type="entry name" value="RNase_PH_C"/>
    <property type="match status" value="2"/>
</dbReference>
<dbReference type="Pfam" id="PF00575">
    <property type="entry name" value="S1"/>
    <property type="match status" value="1"/>
</dbReference>
<dbReference type="PIRSF" id="PIRSF005499">
    <property type="entry name" value="PNPase"/>
    <property type="match status" value="1"/>
</dbReference>
<dbReference type="SMART" id="SM00322">
    <property type="entry name" value="KH"/>
    <property type="match status" value="1"/>
</dbReference>
<dbReference type="SMART" id="SM00316">
    <property type="entry name" value="S1"/>
    <property type="match status" value="1"/>
</dbReference>
<dbReference type="SUPFAM" id="SSF54791">
    <property type="entry name" value="Eukaryotic type KH-domain (KH-domain type I)"/>
    <property type="match status" value="1"/>
</dbReference>
<dbReference type="SUPFAM" id="SSF50249">
    <property type="entry name" value="Nucleic acid-binding proteins"/>
    <property type="match status" value="1"/>
</dbReference>
<dbReference type="SUPFAM" id="SSF46915">
    <property type="entry name" value="Polynucleotide phosphorylase/guanosine pentaphosphate synthase (PNPase/GPSI), domain 3"/>
    <property type="match status" value="1"/>
</dbReference>
<dbReference type="SUPFAM" id="SSF55666">
    <property type="entry name" value="Ribonuclease PH domain 2-like"/>
    <property type="match status" value="2"/>
</dbReference>
<dbReference type="SUPFAM" id="SSF54211">
    <property type="entry name" value="Ribosomal protein S5 domain 2-like"/>
    <property type="match status" value="2"/>
</dbReference>
<dbReference type="PROSITE" id="PS50084">
    <property type="entry name" value="KH_TYPE_1"/>
    <property type="match status" value="1"/>
</dbReference>
<dbReference type="PROSITE" id="PS50126">
    <property type="entry name" value="S1"/>
    <property type="match status" value="1"/>
</dbReference>
<name>PNP_AGRFC</name>
<sequence>MFNKHSVEIEWAGRPLKLETGKVARQADGAVIATYGETMVLATVVSAKSPKPGQDFFPLTVNYQEKTYAAGKIPGGYFKREGRPSEKETLVSRLIDRPIRPLFPEGYKNDTQVVVTVIQHDLENDPDVLSMVAASAALTLSGIPFMGPVGGARVGYINGEYVLNPHLDEMDESVLDLVVAGTQDAVLMVESEAKELNEEIMLGAVMFGHKGFQPVIDAIIKLAEVAAKEPREFEPEDFSALENEMLGLAETELRTAYKITEKAARYAAVDAVKTKVKAHFLPEEGEAKYSPEEIGAVFKHLQAKIVRWNVLDTKSRIDGRDLSTVRPIVSEVGILPRTHGSALFTRGETQAIVVATLGTGEDEQYVDSLTGMYKERFLLHYNFPPYSVGETGRMGSPGRREIGHGKLAWRAIRPMLPTAEQFPYTLRVVSEITESNGSSSMATVCGTSLALMDAGVPLAKPVAGIAMGLILEGERFAVLSDILGDEDHLGDMDFKVAGTADGITSLQMDIKIAGITEEIMKIALEQAQGGRKHILGEMANAITESRGQLGEFAPRIEVMNIPVDKIREVIGSGGKVIREIVEKTGAKINIEDDGTVKIASASGKEIEAARKWIHSIVAEPEVGQIYEGTVVKTADFGAFVNFFGARDGLVHISQLASERVAKTSDVVKEGDKVWVKLMGFDERGKVRLSMKVVDQATGKEVAADKKDGEAAAE</sequence>
<gene>
    <name evidence="1" type="primary">pnp</name>
    <name type="ordered locus">Atu0082</name>
    <name type="ORF">AGR_C_124</name>
</gene>
<comment type="function">
    <text evidence="1">Involved in mRNA degradation. Catalyzes the phosphorolysis of single-stranded polyribonucleotides processively in the 3'- to 5'-direction.</text>
</comment>
<comment type="catalytic activity">
    <reaction evidence="1">
        <text>RNA(n+1) + phosphate = RNA(n) + a ribonucleoside 5'-diphosphate</text>
        <dbReference type="Rhea" id="RHEA:22096"/>
        <dbReference type="Rhea" id="RHEA-COMP:14527"/>
        <dbReference type="Rhea" id="RHEA-COMP:17342"/>
        <dbReference type="ChEBI" id="CHEBI:43474"/>
        <dbReference type="ChEBI" id="CHEBI:57930"/>
        <dbReference type="ChEBI" id="CHEBI:140395"/>
        <dbReference type="EC" id="2.7.7.8"/>
    </reaction>
</comment>
<comment type="cofactor">
    <cofactor evidence="1">
        <name>Mg(2+)</name>
        <dbReference type="ChEBI" id="CHEBI:18420"/>
    </cofactor>
</comment>
<comment type="subcellular location">
    <subcellularLocation>
        <location evidence="1">Cytoplasm</location>
    </subcellularLocation>
</comment>
<comment type="similarity">
    <text evidence="1">Belongs to the polyribonucleotide nucleotidyltransferase family.</text>
</comment>
<reference key="1">
    <citation type="journal article" date="2001" name="Science">
        <title>The genome of the natural genetic engineer Agrobacterium tumefaciens C58.</title>
        <authorList>
            <person name="Wood D.W."/>
            <person name="Setubal J.C."/>
            <person name="Kaul R."/>
            <person name="Monks D.E."/>
            <person name="Kitajima J.P."/>
            <person name="Okura V.K."/>
            <person name="Zhou Y."/>
            <person name="Chen L."/>
            <person name="Wood G.E."/>
            <person name="Almeida N.F. Jr."/>
            <person name="Woo L."/>
            <person name="Chen Y."/>
            <person name="Paulsen I.T."/>
            <person name="Eisen J.A."/>
            <person name="Karp P.D."/>
            <person name="Bovee D. Sr."/>
            <person name="Chapman P."/>
            <person name="Clendenning J."/>
            <person name="Deatherage G."/>
            <person name="Gillet W."/>
            <person name="Grant C."/>
            <person name="Kutyavin T."/>
            <person name="Levy R."/>
            <person name="Li M.-J."/>
            <person name="McClelland E."/>
            <person name="Palmieri A."/>
            <person name="Raymond C."/>
            <person name="Rouse G."/>
            <person name="Saenphimmachak C."/>
            <person name="Wu Z."/>
            <person name="Romero P."/>
            <person name="Gordon D."/>
            <person name="Zhang S."/>
            <person name="Yoo H."/>
            <person name="Tao Y."/>
            <person name="Biddle P."/>
            <person name="Jung M."/>
            <person name="Krespan W."/>
            <person name="Perry M."/>
            <person name="Gordon-Kamm B."/>
            <person name="Liao L."/>
            <person name="Kim S."/>
            <person name="Hendrick C."/>
            <person name="Zhao Z.-Y."/>
            <person name="Dolan M."/>
            <person name="Chumley F."/>
            <person name="Tingey S.V."/>
            <person name="Tomb J.-F."/>
            <person name="Gordon M.P."/>
            <person name="Olson M.V."/>
            <person name="Nester E.W."/>
        </authorList>
    </citation>
    <scope>NUCLEOTIDE SEQUENCE [LARGE SCALE GENOMIC DNA]</scope>
    <source>
        <strain>C58 / ATCC 33970</strain>
    </source>
</reference>
<reference key="2">
    <citation type="journal article" date="2001" name="Science">
        <title>Genome sequence of the plant pathogen and biotechnology agent Agrobacterium tumefaciens C58.</title>
        <authorList>
            <person name="Goodner B."/>
            <person name="Hinkle G."/>
            <person name="Gattung S."/>
            <person name="Miller N."/>
            <person name="Blanchard M."/>
            <person name="Qurollo B."/>
            <person name="Goldman B.S."/>
            <person name="Cao Y."/>
            <person name="Askenazi M."/>
            <person name="Halling C."/>
            <person name="Mullin L."/>
            <person name="Houmiel K."/>
            <person name="Gordon J."/>
            <person name="Vaudin M."/>
            <person name="Iartchouk O."/>
            <person name="Epp A."/>
            <person name="Liu F."/>
            <person name="Wollam C."/>
            <person name="Allinger M."/>
            <person name="Doughty D."/>
            <person name="Scott C."/>
            <person name="Lappas C."/>
            <person name="Markelz B."/>
            <person name="Flanagan C."/>
            <person name="Crowell C."/>
            <person name="Gurson J."/>
            <person name="Lomo C."/>
            <person name="Sear C."/>
            <person name="Strub G."/>
            <person name="Cielo C."/>
            <person name="Slater S."/>
        </authorList>
    </citation>
    <scope>NUCLEOTIDE SEQUENCE [LARGE SCALE GENOMIC DNA]</scope>
    <source>
        <strain>C58 / ATCC 33970</strain>
    </source>
</reference>